<feature type="chain" id="PRO_1000137876" description="tRNA(Ile)-lysidine synthase">
    <location>
        <begin position="1"/>
        <end position="438"/>
    </location>
</feature>
<feature type="binding site" evidence="1">
    <location>
        <begin position="26"/>
        <end position="31"/>
    </location>
    <ligand>
        <name>ATP</name>
        <dbReference type="ChEBI" id="CHEBI:30616"/>
    </ligand>
</feature>
<evidence type="ECO:0000255" key="1">
    <source>
        <dbReference type="HAMAP-Rule" id="MF_01161"/>
    </source>
</evidence>
<reference key="1">
    <citation type="journal article" date="2007" name="PLoS Biol.">
        <title>Evolution of symbiotic bacteria in the distal human intestine.</title>
        <authorList>
            <person name="Xu J."/>
            <person name="Mahowald M.A."/>
            <person name="Ley R.E."/>
            <person name="Lozupone C.A."/>
            <person name="Hamady M."/>
            <person name="Martens E.C."/>
            <person name="Henrissat B."/>
            <person name="Coutinho P.M."/>
            <person name="Minx P."/>
            <person name="Latreille P."/>
            <person name="Cordum H."/>
            <person name="Van Brunt A."/>
            <person name="Kim K."/>
            <person name="Fulton R.S."/>
            <person name="Fulton L.A."/>
            <person name="Clifton S.W."/>
            <person name="Wilson R.K."/>
            <person name="Knight R.D."/>
            <person name="Gordon J.I."/>
        </authorList>
    </citation>
    <scope>NUCLEOTIDE SEQUENCE [LARGE SCALE GENOMIC DNA]</scope>
    <source>
        <strain>ATCC 8503 / DSM 20701 / CIP 104284 / JCM 5825 / NCTC 11152</strain>
    </source>
</reference>
<protein>
    <recommendedName>
        <fullName evidence="1">tRNA(Ile)-lysidine synthase</fullName>
        <ecNumber evidence="1">6.3.4.19</ecNumber>
    </recommendedName>
    <alternativeName>
        <fullName evidence="1">tRNA(Ile)-2-lysyl-cytidine synthase</fullName>
    </alternativeName>
    <alternativeName>
        <fullName evidence="1">tRNA(Ile)-lysidine synthetase</fullName>
    </alternativeName>
</protein>
<comment type="function">
    <text evidence="1">Ligates lysine onto the cytidine present at position 34 of the AUA codon-specific tRNA(Ile) that contains the anticodon CAU, in an ATP-dependent manner. Cytidine is converted to lysidine, thus changing the amino acid specificity of the tRNA from methionine to isoleucine.</text>
</comment>
<comment type="catalytic activity">
    <reaction evidence="1">
        <text>cytidine(34) in tRNA(Ile2) + L-lysine + ATP = lysidine(34) in tRNA(Ile2) + AMP + diphosphate + H(+)</text>
        <dbReference type="Rhea" id="RHEA:43744"/>
        <dbReference type="Rhea" id="RHEA-COMP:10625"/>
        <dbReference type="Rhea" id="RHEA-COMP:10670"/>
        <dbReference type="ChEBI" id="CHEBI:15378"/>
        <dbReference type="ChEBI" id="CHEBI:30616"/>
        <dbReference type="ChEBI" id="CHEBI:32551"/>
        <dbReference type="ChEBI" id="CHEBI:33019"/>
        <dbReference type="ChEBI" id="CHEBI:82748"/>
        <dbReference type="ChEBI" id="CHEBI:83665"/>
        <dbReference type="ChEBI" id="CHEBI:456215"/>
        <dbReference type="EC" id="6.3.4.19"/>
    </reaction>
</comment>
<comment type="subcellular location">
    <subcellularLocation>
        <location evidence="1">Cytoplasm</location>
    </subcellularLocation>
</comment>
<comment type="domain">
    <text>The N-terminal region contains the highly conserved SGGXDS motif, predicted to be a P-loop motif involved in ATP binding.</text>
</comment>
<comment type="similarity">
    <text evidence="1">Belongs to the tRNA(Ile)-lysidine synthase family.</text>
</comment>
<proteinExistence type="inferred from homology"/>
<accession>A6LBU3</accession>
<gene>
    <name evidence="1" type="primary">tilS</name>
    <name type="ordered locus">BDI_1399</name>
</gene>
<keyword id="KW-0067">ATP-binding</keyword>
<keyword id="KW-0963">Cytoplasm</keyword>
<keyword id="KW-0436">Ligase</keyword>
<keyword id="KW-0547">Nucleotide-binding</keyword>
<keyword id="KW-1185">Reference proteome</keyword>
<keyword id="KW-0819">tRNA processing</keyword>
<name>TILS_PARD8</name>
<sequence>MIHTIRLYIEKYRLLSEDRPVLVGLSGGADSVALLGVLVRLGYPCIALHCNFHLRGEESDRDEAFACEFAESLEVPFHKIDFDTISYAGERHLSIEMAARELRYAWFEEMRERLGGQATAVAHHRDDNVETVLMNLIRGTGIRGMSGIRPRNGFIVRPLLCVSREDILAWLADQGYAYMVDSTNLSDAYTRNFIRLNVLPLLEEINPSARNTIARSAEHLSAAETIYIYVLEQARKEVVVSDDRLSIGALMRFPAPETILYELLKEYGFTRLVSDDIFAALTKEPGKLFYSSTHRLLKDRDYLWITSLEKKEKRTFVLDPEKGINHEPIELSFQKLVITIDFPIEKNKRIAYLDYDKLDFPLTLRTWKEGDWFIPFGMKGRKKLSDYFSDHKFSRIEKERTWLLCSGDAIVWVVGERTDNRFRIDESTKRVLIVNFLG</sequence>
<dbReference type="EC" id="6.3.4.19" evidence="1"/>
<dbReference type="EMBL" id="CP000140">
    <property type="protein sequence ID" value="ABR43157.1"/>
    <property type="molecule type" value="Genomic_DNA"/>
</dbReference>
<dbReference type="RefSeq" id="WP_005856304.1">
    <property type="nucleotide sequence ID" value="NZ_LR215978.1"/>
</dbReference>
<dbReference type="SMR" id="A6LBU3"/>
<dbReference type="STRING" id="435591.BDI_1399"/>
<dbReference type="PaxDb" id="435591-BDI_1399"/>
<dbReference type="KEGG" id="pdi:BDI_1399"/>
<dbReference type="eggNOG" id="COG0037">
    <property type="taxonomic scope" value="Bacteria"/>
</dbReference>
<dbReference type="HOGENOM" id="CLU_018869_0_1_10"/>
<dbReference type="BioCyc" id="PDIS435591:G1G5A-1439-MONOMER"/>
<dbReference type="Proteomes" id="UP000000566">
    <property type="component" value="Chromosome"/>
</dbReference>
<dbReference type="GO" id="GO:0005737">
    <property type="term" value="C:cytoplasm"/>
    <property type="evidence" value="ECO:0007669"/>
    <property type="project" value="UniProtKB-SubCell"/>
</dbReference>
<dbReference type="GO" id="GO:0005524">
    <property type="term" value="F:ATP binding"/>
    <property type="evidence" value="ECO:0007669"/>
    <property type="project" value="UniProtKB-UniRule"/>
</dbReference>
<dbReference type="GO" id="GO:0032267">
    <property type="term" value="F:tRNA(Ile)-lysidine synthase activity"/>
    <property type="evidence" value="ECO:0007669"/>
    <property type="project" value="UniProtKB-EC"/>
</dbReference>
<dbReference type="GO" id="GO:0006400">
    <property type="term" value="P:tRNA modification"/>
    <property type="evidence" value="ECO:0007669"/>
    <property type="project" value="UniProtKB-UniRule"/>
</dbReference>
<dbReference type="CDD" id="cd01992">
    <property type="entry name" value="TilS_N"/>
    <property type="match status" value="1"/>
</dbReference>
<dbReference type="Gene3D" id="3.40.50.620">
    <property type="entry name" value="HUPs"/>
    <property type="match status" value="1"/>
</dbReference>
<dbReference type="HAMAP" id="MF_01161">
    <property type="entry name" value="tRNA_Ile_lys_synt"/>
    <property type="match status" value="1"/>
</dbReference>
<dbReference type="InterPro" id="IPR012796">
    <property type="entry name" value="Lysidine-tRNA-synth_C"/>
</dbReference>
<dbReference type="InterPro" id="IPR014729">
    <property type="entry name" value="Rossmann-like_a/b/a_fold"/>
</dbReference>
<dbReference type="InterPro" id="IPR011063">
    <property type="entry name" value="TilS/TtcA_N"/>
</dbReference>
<dbReference type="InterPro" id="IPR012094">
    <property type="entry name" value="tRNA_Ile_lys_synt"/>
</dbReference>
<dbReference type="InterPro" id="IPR012795">
    <property type="entry name" value="tRNA_Ile_lys_synt_N"/>
</dbReference>
<dbReference type="NCBIfam" id="TIGR02433">
    <property type="entry name" value="lysidine_TilS_C"/>
    <property type="match status" value="1"/>
</dbReference>
<dbReference type="NCBIfam" id="TIGR02432">
    <property type="entry name" value="lysidine_TilS_N"/>
    <property type="match status" value="1"/>
</dbReference>
<dbReference type="PANTHER" id="PTHR43033">
    <property type="entry name" value="TRNA(ILE)-LYSIDINE SYNTHASE-RELATED"/>
    <property type="match status" value="1"/>
</dbReference>
<dbReference type="PANTHER" id="PTHR43033:SF1">
    <property type="entry name" value="TRNA(ILE)-LYSIDINE SYNTHASE-RELATED"/>
    <property type="match status" value="1"/>
</dbReference>
<dbReference type="Pfam" id="PF01171">
    <property type="entry name" value="ATP_bind_3"/>
    <property type="match status" value="1"/>
</dbReference>
<dbReference type="Pfam" id="PF11734">
    <property type="entry name" value="TilS_C"/>
    <property type="match status" value="1"/>
</dbReference>
<dbReference type="SMART" id="SM00977">
    <property type="entry name" value="TilS_C"/>
    <property type="match status" value="1"/>
</dbReference>
<dbReference type="SUPFAM" id="SSF52402">
    <property type="entry name" value="Adenine nucleotide alpha hydrolases-like"/>
    <property type="match status" value="1"/>
</dbReference>
<dbReference type="SUPFAM" id="SSF56037">
    <property type="entry name" value="PheT/TilS domain"/>
    <property type="match status" value="1"/>
</dbReference>
<organism>
    <name type="scientific">Parabacteroides distasonis (strain ATCC 8503 / DSM 20701 / CIP 104284 / JCM 5825 / NCTC 11152)</name>
    <dbReference type="NCBI Taxonomy" id="435591"/>
    <lineage>
        <taxon>Bacteria</taxon>
        <taxon>Pseudomonadati</taxon>
        <taxon>Bacteroidota</taxon>
        <taxon>Bacteroidia</taxon>
        <taxon>Bacteroidales</taxon>
        <taxon>Tannerellaceae</taxon>
        <taxon>Parabacteroides</taxon>
    </lineage>
</organism>